<dbReference type="EC" id="2.5.1.61" evidence="1"/>
<dbReference type="EMBL" id="CP000721">
    <property type="protein sequence ID" value="ABR33465.1"/>
    <property type="molecule type" value="Genomic_DNA"/>
</dbReference>
<dbReference type="RefSeq" id="WP_011968619.1">
    <property type="nucleotide sequence ID" value="NC_009617.1"/>
</dbReference>
<dbReference type="SMR" id="A6LSY5"/>
<dbReference type="KEGG" id="cbe:Cbei_1285"/>
<dbReference type="eggNOG" id="COG0181">
    <property type="taxonomic scope" value="Bacteria"/>
</dbReference>
<dbReference type="HOGENOM" id="CLU_019704_1_0_9"/>
<dbReference type="UniPathway" id="UPA00251">
    <property type="reaction ID" value="UER00319"/>
</dbReference>
<dbReference type="Proteomes" id="UP000000565">
    <property type="component" value="Chromosome"/>
</dbReference>
<dbReference type="GO" id="GO:0005737">
    <property type="term" value="C:cytoplasm"/>
    <property type="evidence" value="ECO:0007669"/>
    <property type="project" value="TreeGrafter"/>
</dbReference>
<dbReference type="GO" id="GO:0004418">
    <property type="term" value="F:hydroxymethylbilane synthase activity"/>
    <property type="evidence" value="ECO:0007669"/>
    <property type="project" value="UniProtKB-UniRule"/>
</dbReference>
<dbReference type="GO" id="GO:0006782">
    <property type="term" value="P:protoporphyrinogen IX biosynthetic process"/>
    <property type="evidence" value="ECO:0007669"/>
    <property type="project" value="UniProtKB-UniRule"/>
</dbReference>
<dbReference type="CDD" id="cd13647">
    <property type="entry name" value="PBP2_PBGD_2"/>
    <property type="match status" value="1"/>
</dbReference>
<dbReference type="FunFam" id="3.40.190.10:FF:000005">
    <property type="entry name" value="Porphobilinogen deaminase"/>
    <property type="match status" value="1"/>
</dbReference>
<dbReference type="Gene3D" id="3.40.190.10">
    <property type="entry name" value="Periplasmic binding protein-like II"/>
    <property type="match status" value="2"/>
</dbReference>
<dbReference type="Gene3D" id="3.30.160.40">
    <property type="entry name" value="Porphobilinogen deaminase, C-terminal domain"/>
    <property type="match status" value="1"/>
</dbReference>
<dbReference type="HAMAP" id="MF_00260">
    <property type="entry name" value="Porphobil_deam"/>
    <property type="match status" value="1"/>
</dbReference>
<dbReference type="InterPro" id="IPR000860">
    <property type="entry name" value="HemC"/>
</dbReference>
<dbReference type="InterPro" id="IPR022419">
    <property type="entry name" value="Porphobilin_deaminase_cofac_BS"/>
</dbReference>
<dbReference type="InterPro" id="IPR022417">
    <property type="entry name" value="Porphobilin_deaminase_N"/>
</dbReference>
<dbReference type="InterPro" id="IPR022418">
    <property type="entry name" value="Porphobilinogen_deaminase_C"/>
</dbReference>
<dbReference type="InterPro" id="IPR036803">
    <property type="entry name" value="Porphobilinogen_deaminase_C_sf"/>
</dbReference>
<dbReference type="NCBIfam" id="TIGR00212">
    <property type="entry name" value="hemC"/>
    <property type="match status" value="1"/>
</dbReference>
<dbReference type="PANTHER" id="PTHR11557">
    <property type="entry name" value="PORPHOBILINOGEN DEAMINASE"/>
    <property type="match status" value="1"/>
</dbReference>
<dbReference type="PANTHER" id="PTHR11557:SF0">
    <property type="entry name" value="PORPHOBILINOGEN DEAMINASE"/>
    <property type="match status" value="1"/>
</dbReference>
<dbReference type="Pfam" id="PF01379">
    <property type="entry name" value="Porphobil_deam"/>
    <property type="match status" value="1"/>
</dbReference>
<dbReference type="Pfam" id="PF03900">
    <property type="entry name" value="Porphobil_deamC"/>
    <property type="match status" value="1"/>
</dbReference>
<dbReference type="PIRSF" id="PIRSF001438">
    <property type="entry name" value="4pyrrol_synth_OHMeBilane_synth"/>
    <property type="match status" value="1"/>
</dbReference>
<dbReference type="PRINTS" id="PR00151">
    <property type="entry name" value="PORPHBDMNASE"/>
</dbReference>
<dbReference type="SUPFAM" id="SSF53850">
    <property type="entry name" value="Periplasmic binding protein-like II"/>
    <property type="match status" value="1"/>
</dbReference>
<dbReference type="SUPFAM" id="SSF54782">
    <property type="entry name" value="Porphobilinogen deaminase (hydroxymethylbilane synthase), C-terminal domain"/>
    <property type="match status" value="1"/>
</dbReference>
<dbReference type="PROSITE" id="PS00533">
    <property type="entry name" value="PORPHOBILINOGEN_DEAM"/>
    <property type="match status" value="1"/>
</dbReference>
<organism>
    <name type="scientific">Clostridium beijerinckii (strain ATCC 51743 / NCIMB 8052)</name>
    <name type="common">Clostridium acetobutylicum</name>
    <dbReference type="NCBI Taxonomy" id="290402"/>
    <lineage>
        <taxon>Bacteria</taxon>
        <taxon>Bacillati</taxon>
        <taxon>Bacillota</taxon>
        <taxon>Clostridia</taxon>
        <taxon>Eubacteriales</taxon>
        <taxon>Clostridiaceae</taxon>
        <taxon>Clostridium</taxon>
    </lineage>
</organism>
<protein>
    <recommendedName>
        <fullName evidence="1">Porphobilinogen deaminase</fullName>
        <shortName evidence="1">PBG</shortName>
        <ecNumber evidence="1">2.5.1.61</ecNumber>
    </recommendedName>
    <alternativeName>
        <fullName evidence="1">Hydroxymethylbilane synthase</fullName>
        <shortName evidence="1">HMBS</shortName>
    </alternativeName>
    <alternativeName>
        <fullName evidence="1">Pre-uroporphyrinogen synthase</fullName>
    </alternativeName>
</protein>
<accession>A6LSY5</accession>
<gene>
    <name evidence="1" type="primary">hemC</name>
    <name type="ordered locus">Cbei_1285</name>
</gene>
<reference key="1">
    <citation type="submission" date="2007-06" db="EMBL/GenBank/DDBJ databases">
        <title>Complete sequence of Clostridium beijerinckii NCIMB 8052.</title>
        <authorList>
            <consortium name="US DOE Joint Genome Institute"/>
            <person name="Copeland A."/>
            <person name="Lucas S."/>
            <person name="Lapidus A."/>
            <person name="Barry K."/>
            <person name="Detter J.C."/>
            <person name="Glavina del Rio T."/>
            <person name="Hammon N."/>
            <person name="Israni S."/>
            <person name="Dalin E."/>
            <person name="Tice H."/>
            <person name="Pitluck S."/>
            <person name="Sims D."/>
            <person name="Brettin T."/>
            <person name="Bruce D."/>
            <person name="Tapia R."/>
            <person name="Brainard J."/>
            <person name="Schmutz J."/>
            <person name="Larimer F."/>
            <person name="Land M."/>
            <person name="Hauser L."/>
            <person name="Kyrpides N."/>
            <person name="Mikhailova N."/>
            <person name="Bennet G."/>
            <person name="Cann I."/>
            <person name="Chen J.-S."/>
            <person name="Contreras A.L."/>
            <person name="Jones D."/>
            <person name="Kashket E."/>
            <person name="Mitchell W."/>
            <person name="Stoddard S."/>
            <person name="Schwarz W."/>
            <person name="Qureshi N."/>
            <person name="Young M."/>
            <person name="Shi Z."/>
            <person name="Ezeji T."/>
            <person name="White B."/>
            <person name="Blaschek H."/>
            <person name="Richardson P."/>
        </authorList>
    </citation>
    <scope>NUCLEOTIDE SEQUENCE [LARGE SCALE GENOMIC DNA]</scope>
    <source>
        <strain>ATCC 51743 / NCIMB 8052</strain>
    </source>
</reference>
<evidence type="ECO:0000255" key="1">
    <source>
        <dbReference type="HAMAP-Rule" id="MF_00260"/>
    </source>
</evidence>
<proteinExistence type="inferred from homology"/>
<name>HEM3_CLOB8</name>
<keyword id="KW-0627">Porphyrin biosynthesis</keyword>
<keyword id="KW-0808">Transferase</keyword>
<sequence length="291" mass="32699">MNKLTIATRKSKLAQTQTEIIMKSLKDKFNIDSEKMLIVTEGDRKLDVSLAKIGGKGLFVKDIEIALLEKRADGAVHSMKDVPYELSHEFEIAAITEREDIRDVLISKDNIPFKELRKGAIIGTSSIRRACQLKLMRNDLDIVPIRGNVQTRLEKMKEQNLDGIILASAGLKRLNEEDIITEYFDPKVFIPAVAQGALGIECLKTSSAKKYFEKMEDSNAKLTVEAERSFMRMLNGDCHSLIGAYSEIQGNDLYMIGIYDIGGRIVKKDILGDKNDHIELGRKLANKILEI</sequence>
<feature type="chain" id="PRO_1000125661" description="Porphobilinogen deaminase">
    <location>
        <begin position="1"/>
        <end position="291"/>
    </location>
</feature>
<feature type="modified residue" description="S-(dipyrrolylmethanemethyl)cysteine" evidence="1">
    <location>
        <position position="238"/>
    </location>
</feature>
<comment type="function">
    <text evidence="1">Tetrapolymerization of the monopyrrole PBG into the hydroxymethylbilane pre-uroporphyrinogen in several discrete steps.</text>
</comment>
<comment type="catalytic activity">
    <reaction evidence="1">
        <text>4 porphobilinogen + H2O = hydroxymethylbilane + 4 NH4(+)</text>
        <dbReference type="Rhea" id="RHEA:13185"/>
        <dbReference type="ChEBI" id="CHEBI:15377"/>
        <dbReference type="ChEBI" id="CHEBI:28938"/>
        <dbReference type="ChEBI" id="CHEBI:57845"/>
        <dbReference type="ChEBI" id="CHEBI:58126"/>
        <dbReference type="EC" id="2.5.1.61"/>
    </reaction>
</comment>
<comment type="cofactor">
    <cofactor evidence="1">
        <name>dipyrromethane</name>
        <dbReference type="ChEBI" id="CHEBI:60342"/>
    </cofactor>
    <text evidence="1">Binds 1 dipyrromethane group covalently.</text>
</comment>
<comment type="pathway">
    <text evidence="1">Porphyrin-containing compound metabolism; protoporphyrin-IX biosynthesis; coproporphyrinogen-III from 5-aminolevulinate: step 2/4.</text>
</comment>
<comment type="subunit">
    <text evidence="1">Monomer.</text>
</comment>
<comment type="miscellaneous">
    <text evidence="1">The porphobilinogen subunits are added to the dipyrromethane group.</text>
</comment>
<comment type="similarity">
    <text evidence="1">Belongs to the HMBS family.</text>
</comment>